<protein>
    <recommendedName>
        <fullName evidence="1">GTPase Der</fullName>
    </recommendedName>
    <alternativeName>
        <fullName evidence="1">GTP-binding protein EngA</fullName>
    </alternativeName>
</protein>
<gene>
    <name evidence="1" type="primary">der</name>
    <name type="synonym">engA</name>
    <name type="ordered locus">SG2554</name>
</gene>
<sequence>MVPVVALVGRPNVGKSTLFNRLTRTRDALVADFPGLTRDRKYGRAEVEGREFICIDTGGIDGTEDGVETRMAEQSLLAIEEADVVLFMVDARAGLMPADEAIAKHLRSREKPTFLVANKTDGLDPDQAVVDFYSLGLGEIYPIAASHGRGVLSLLEHVLLPWMDDVAPQEEVDEDAEYWAQFEVEQNGEEAPEDDFDPQSLPIKLAIVGRPNVGKSTLTNRILGEERVVVYDMPGTTRDSIYIPMERDEREYVLIDTAGVRKRGKITDAVEKFSVIKTLQAIEDANVVLLVIDAREGISDQDLSLLGFILNSGRSLVIVVNKWDGLSQEVKEQVKETLDFRLGFIDFARVHFISALHGSDVGNLFESVREAYDSSTRRVSTAMLTRIMTMAVEDHQPPLVRGRRVKLKYAHAGGYNPPIVVIHGNQVKDLPDSYKRYLMNYFRKSLEVMGTPIRIQFKEGENPYANKRNTLTPTQMRKRKRLMKHIKKSK</sequence>
<accession>B5RCY8</accession>
<feature type="chain" id="PRO_1000099157" description="GTPase Der">
    <location>
        <begin position="1"/>
        <end position="490"/>
    </location>
</feature>
<feature type="domain" description="EngA-type G 1">
    <location>
        <begin position="3"/>
        <end position="166"/>
    </location>
</feature>
<feature type="domain" description="EngA-type G 2">
    <location>
        <begin position="203"/>
        <end position="376"/>
    </location>
</feature>
<feature type="domain" description="KH-like" evidence="1">
    <location>
        <begin position="377"/>
        <end position="461"/>
    </location>
</feature>
<feature type="binding site" evidence="1">
    <location>
        <begin position="9"/>
        <end position="16"/>
    </location>
    <ligand>
        <name>GTP</name>
        <dbReference type="ChEBI" id="CHEBI:37565"/>
        <label>1</label>
    </ligand>
</feature>
<feature type="binding site" evidence="1">
    <location>
        <begin position="56"/>
        <end position="60"/>
    </location>
    <ligand>
        <name>GTP</name>
        <dbReference type="ChEBI" id="CHEBI:37565"/>
        <label>1</label>
    </ligand>
</feature>
<feature type="binding site" evidence="1">
    <location>
        <begin position="118"/>
        <end position="121"/>
    </location>
    <ligand>
        <name>GTP</name>
        <dbReference type="ChEBI" id="CHEBI:37565"/>
        <label>1</label>
    </ligand>
</feature>
<feature type="binding site" evidence="1">
    <location>
        <begin position="209"/>
        <end position="216"/>
    </location>
    <ligand>
        <name>GTP</name>
        <dbReference type="ChEBI" id="CHEBI:37565"/>
        <label>2</label>
    </ligand>
</feature>
<feature type="binding site" evidence="1">
    <location>
        <begin position="256"/>
        <end position="260"/>
    </location>
    <ligand>
        <name>GTP</name>
        <dbReference type="ChEBI" id="CHEBI:37565"/>
        <label>2</label>
    </ligand>
</feature>
<feature type="binding site" evidence="1">
    <location>
        <begin position="321"/>
        <end position="324"/>
    </location>
    <ligand>
        <name>GTP</name>
        <dbReference type="ChEBI" id="CHEBI:37565"/>
        <label>2</label>
    </ligand>
</feature>
<proteinExistence type="inferred from homology"/>
<reference key="1">
    <citation type="journal article" date="2008" name="Genome Res.">
        <title>Comparative genome analysis of Salmonella enteritidis PT4 and Salmonella gallinarum 287/91 provides insights into evolutionary and host adaptation pathways.</title>
        <authorList>
            <person name="Thomson N.R."/>
            <person name="Clayton D.J."/>
            <person name="Windhorst D."/>
            <person name="Vernikos G."/>
            <person name="Davidson S."/>
            <person name="Churcher C."/>
            <person name="Quail M.A."/>
            <person name="Stevens M."/>
            <person name="Jones M.A."/>
            <person name="Watson M."/>
            <person name="Barron A."/>
            <person name="Layton A."/>
            <person name="Pickard D."/>
            <person name="Kingsley R.A."/>
            <person name="Bignell A."/>
            <person name="Clark L."/>
            <person name="Harris B."/>
            <person name="Ormond D."/>
            <person name="Abdellah Z."/>
            <person name="Brooks K."/>
            <person name="Cherevach I."/>
            <person name="Chillingworth T."/>
            <person name="Woodward J."/>
            <person name="Norberczak H."/>
            <person name="Lord A."/>
            <person name="Arrowsmith C."/>
            <person name="Jagels K."/>
            <person name="Moule S."/>
            <person name="Mungall K."/>
            <person name="Saunders M."/>
            <person name="Whitehead S."/>
            <person name="Chabalgoity J.A."/>
            <person name="Maskell D."/>
            <person name="Humphreys T."/>
            <person name="Roberts M."/>
            <person name="Barrow P.A."/>
            <person name="Dougan G."/>
            <person name="Parkhill J."/>
        </authorList>
    </citation>
    <scope>NUCLEOTIDE SEQUENCE [LARGE SCALE GENOMIC DNA]</scope>
    <source>
        <strain>287/91 / NCTC 13346</strain>
    </source>
</reference>
<evidence type="ECO:0000255" key="1">
    <source>
        <dbReference type="HAMAP-Rule" id="MF_00195"/>
    </source>
</evidence>
<organism>
    <name type="scientific">Salmonella gallinarum (strain 287/91 / NCTC 13346)</name>
    <dbReference type="NCBI Taxonomy" id="550538"/>
    <lineage>
        <taxon>Bacteria</taxon>
        <taxon>Pseudomonadati</taxon>
        <taxon>Pseudomonadota</taxon>
        <taxon>Gammaproteobacteria</taxon>
        <taxon>Enterobacterales</taxon>
        <taxon>Enterobacteriaceae</taxon>
        <taxon>Salmonella</taxon>
    </lineage>
</organism>
<keyword id="KW-0342">GTP-binding</keyword>
<keyword id="KW-0547">Nucleotide-binding</keyword>
<keyword id="KW-0677">Repeat</keyword>
<keyword id="KW-0690">Ribosome biogenesis</keyword>
<dbReference type="EMBL" id="AM933173">
    <property type="protein sequence ID" value="CAR38374.1"/>
    <property type="molecule type" value="Genomic_DNA"/>
</dbReference>
<dbReference type="RefSeq" id="WP_000249414.1">
    <property type="nucleotide sequence ID" value="NC_011274.1"/>
</dbReference>
<dbReference type="SMR" id="B5RCY8"/>
<dbReference type="KEGG" id="seg:SG2554"/>
<dbReference type="HOGENOM" id="CLU_016077_5_1_6"/>
<dbReference type="Proteomes" id="UP000008321">
    <property type="component" value="Chromosome"/>
</dbReference>
<dbReference type="GO" id="GO:0005525">
    <property type="term" value="F:GTP binding"/>
    <property type="evidence" value="ECO:0007669"/>
    <property type="project" value="UniProtKB-UniRule"/>
</dbReference>
<dbReference type="GO" id="GO:0043022">
    <property type="term" value="F:ribosome binding"/>
    <property type="evidence" value="ECO:0007669"/>
    <property type="project" value="TreeGrafter"/>
</dbReference>
<dbReference type="GO" id="GO:0042254">
    <property type="term" value="P:ribosome biogenesis"/>
    <property type="evidence" value="ECO:0007669"/>
    <property type="project" value="UniProtKB-KW"/>
</dbReference>
<dbReference type="CDD" id="cd01894">
    <property type="entry name" value="EngA1"/>
    <property type="match status" value="1"/>
</dbReference>
<dbReference type="CDD" id="cd01895">
    <property type="entry name" value="EngA2"/>
    <property type="match status" value="1"/>
</dbReference>
<dbReference type="FunFam" id="3.30.300.20:FF:000004">
    <property type="entry name" value="GTPase Der"/>
    <property type="match status" value="1"/>
</dbReference>
<dbReference type="FunFam" id="3.40.50.300:FF:000040">
    <property type="entry name" value="GTPase Der"/>
    <property type="match status" value="1"/>
</dbReference>
<dbReference type="FunFam" id="3.40.50.300:FF:000057">
    <property type="entry name" value="GTPase Der"/>
    <property type="match status" value="1"/>
</dbReference>
<dbReference type="Gene3D" id="3.30.300.20">
    <property type="match status" value="1"/>
</dbReference>
<dbReference type="Gene3D" id="3.40.50.300">
    <property type="entry name" value="P-loop containing nucleotide triphosphate hydrolases"/>
    <property type="match status" value="2"/>
</dbReference>
<dbReference type="HAMAP" id="MF_00195">
    <property type="entry name" value="GTPase_Der"/>
    <property type="match status" value="1"/>
</dbReference>
<dbReference type="InterPro" id="IPR031166">
    <property type="entry name" value="G_ENGA"/>
</dbReference>
<dbReference type="InterPro" id="IPR006073">
    <property type="entry name" value="GTP-bd"/>
</dbReference>
<dbReference type="InterPro" id="IPR016484">
    <property type="entry name" value="GTPase_Der"/>
</dbReference>
<dbReference type="InterPro" id="IPR032859">
    <property type="entry name" value="KH_dom-like"/>
</dbReference>
<dbReference type="InterPro" id="IPR015946">
    <property type="entry name" value="KH_dom-like_a/b"/>
</dbReference>
<dbReference type="InterPro" id="IPR027417">
    <property type="entry name" value="P-loop_NTPase"/>
</dbReference>
<dbReference type="InterPro" id="IPR005225">
    <property type="entry name" value="Small_GTP-bd"/>
</dbReference>
<dbReference type="NCBIfam" id="TIGR03594">
    <property type="entry name" value="GTPase_EngA"/>
    <property type="match status" value="1"/>
</dbReference>
<dbReference type="NCBIfam" id="TIGR00231">
    <property type="entry name" value="small_GTP"/>
    <property type="match status" value="2"/>
</dbReference>
<dbReference type="PANTHER" id="PTHR43834">
    <property type="entry name" value="GTPASE DER"/>
    <property type="match status" value="1"/>
</dbReference>
<dbReference type="PANTHER" id="PTHR43834:SF6">
    <property type="entry name" value="GTPASE DER"/>
    <property type="match status" value="1"/>
</dbReference>
<dbReference type="Pfam" id="PF14714">
    <property type="entry name" value="KH_dom-like"/>
    <property type="match status" value="1"/>
</dbReference>
<dbReference type="Pfam" id="PF01926">
    <property type="entry name" value="MMR_HSR1"/>
    <property type="match status" value="2"/>
</dbReference>
<dbReference type="PIRSF" id="PIRSF006485">
    <property type="entry name" value="GTP-binding_EngA"/>
    <property type="match status" value="1"/>
</dbReference>
<dbReference type="PRINTS" id="PR00326">
    <property type="entry name" value="GTP1OBG"/>
</dbReference>
<dbReference type="SUPFAM" id="SSF52540">
    <property type="entry name" value="P-loop containing nucleoside triphosphate hydrolases"/>
    <property type="match status" value="2"/>
</dbReference>
<dbReference type="PROSITE" id="PS51712">
    <property type="entry name" value="G_ENGA"/>
    <property type="match status" value="2"/>
</dbReference>
<name>DER_SALG2</name>
<comment type="function">
    <text evidence="1">GTPase that plays an essential role in the late steps of ribosome biogenesis.</text>
</comment>
<comment type="subunit">
    <text evidence="1">Associates with the 50S ribosomal subunit.</text>
</comment>
<comment type="similarity">
    <text evidence="1">Belongs to the TRAFAC class TrmE-Era-EngA-EngB-Septin-like GTPase superfamily. EngA (Der) GTPase family.</text>
</comment>